<comment type="function">
    <text evidence="1">Synthesizes alpha-1,4-glucan chains using ADP-glucose.</text>
</comment>
<comment type="catalytic activity">
    <reaction evidence="1">
        <text>[(1-&gt;4)-alpha-D-glucosyl](n) + ADP-alpha-D-glucose = [(1-&gt;4)-alpha-D-glucosyl](n+1) + ADP + H(+)</text>
        <dbReference type="Rhea" id="RHEA:18189"/>
        <dbReference type="Rhea" id="RHEA-COMP:9584"/>
        <dbReference type="Rhea" id="RHEA-COMP:9587"/>
        <dbReference type="ChEBI" id="CHEBI:15378"/>
        <dbReference type="ChEBI" id="CHEBI:15444"/>
        <dbReference type="ChEBI" id="CHEBI:57498"/>
        <dbReference type="ChEBI" id="CHEBI:456216"/>
        <dbReference type="EC" id="2.4.1.21"/>
    </reaction>
</comment>
<comment type="pathway">
    <text evidence="1">Glycan biosynthesis; glycogen biosynthesis.</text>
</comment>
<comment type="similarity">
    <text evidence="1">Belongs to the glycosyltransferase 1 family. Bacterial/plant glycogen synthase subfamily.</text>
</comment>
<feature type="chain" id="PRO_0000188605" description="Glycogen synthase">
    <location>
        <begin position="1"/>
        <end position="488"/>
    </location>
</feature>
<feature type="binding site" evidence="1">
    <location>
        <position position="20"/>
    </location>
    <ligand>
        <name>ADP-alpha-D-glucose</name>
        <dbReference type="ChEBI" id="CHEBI:57498"/>
    </ligand>
</feature>
<keyword id="KW-0320">Glycogen biosynthesis</keyword>
<keyword id="KW-0328">Glycosyltransferase</keyword>
<keyword id="KW-1185">Reference proteome</keyword>
<keyword id="KW-0808">Transferase</keyword>
<name>GLGA_CHLTE</name>
<protein>
    <recommendedName>
        <fullName evidence="1">Glycogen synthase</fullName>
        <ecNumber evidence="1">2.4.1.21</ecNumber>
    </recommendedName>
    <alternativeName>
        <fullName evidence="1">Starch [bacterial glycogen] synthase</fullName>
    </alternativeName>
</protein>
<proteinExistence type="inferred from homology"/>
<accession>Q8KAY6</accession>
<gene>
    <name evidence="1" type="primary">glgA</name>
    <name type="ordered locus">CT2012</name>
</gene>
<dbReference type="EC" id="2.4.1.21" evidence="1"/>
<dbReference type="EMBL" id="AE006470">
    <property type="protein sequence ID" value="AAM73230.1"/>
    <property type="molecule type" value="Genomic_DNA"/>
</dbReference>
<dbReference type="RefSeq" id="NP_662888.1">
    <property type="nucleotide sequence ID" value="NC_002932.3"/>
</dbReference>
<dbReference type="RefSeq" id="WP_010933668.1">
    <property type="nucleotide sequence ID" value="NC_002932.3"/>
</dbReference>
<dbReference type="SMR" id="Q8KAY6"/>
<dbReference type="STRING" id="194439.CT2012"/>
<dbReference type="CAZy" id="GT5">
    <property type="family name" value="Glycosyltransferase Family 5"/>
</dbReference>
<dbReference type="DNASU" id="1007549"/>
<dbReference type="EnsemblBacteria" id="AAM73230">
    <property type="protein sequence ID" value="AAM73230"/>
    <property type="gene ID" value="CT2012"/>
</dbReference>
<dbReference type="KEGG" id="cte:CT2012"/>
<dbReference type="PATRIC" id="fig|194439.7.peg.1823"/>
<dbReference type="eggNOG" id="COG0297">
    <property type="taxonomic scope" value="Bacteria"/>
</dbReference>
<dbReference type="HOGENOM" id="CLU_009583_18_0_10"/>
<dbReference type="OrthoDB" id="9808590at2"/>
<dbReference type="UniPathway" id="UPA00164"/>
<dbReference type="Proteomes" id="UP000001007">
    <property type="component" value="Chromosome"/>
</dbReference>
<dbReference type="GO" id="GO:0009011">
    <property type="term" value="F:alpha-1,4-glucan glucosyltransferase (ADP-glucose donor) activity"/>
    <property type="evidence" value="ECO:0007669"/>
    <property type="project" value="UniProtKB-UniRule"/>
</dbReference>
<dbReference type="GO" id="GO:0004373">
    <property type="term" value="F:alpha-1,4-glucan glucosyltransferase (UDP-glucose donor) activity"/>
    <property type="evidence" value="ECO:0007669"/>
    <property type="project" value="InterPro"/>
</dbReference>
<dbReference type="GO" id="GO:0005978">
    <property type="term" value="P:glycogen biosynthetic process"/>
    <property type="evidence" value="ECO:0007669"/>
    <property type="project" value="UniProtKB-UniRule"/>
</dbReference>
<dbReference type="CDD" id="cd03791">
    <property type="entry name" value="GT5_Glycogen_synthase_DULL1-like"/>
    <property type="match status" value="1"/>
</dbReference>
<dbReference type="Gene3D" id="3.40.50.2000">
    <property type="entry name" value="Glycogen Phosphorylase B"/>
    <property type="match status" value="2"/>
</dbReference>
<dbReference type="HAMAP" id="MF_00484">
    <property type="entry name" value="Glycogen_synth"/>
    <property type="match status" value="1"/>
</dbReference>
<dbReference type="InterPro" id="IPR001296">
    <property type="entry name" value="Glyco_trans_1"/>
</dbReference>
<dbReference type="InterPro" id="IPR011835">
    <property type="entry name" value="GS/SS"/>
</dbReference>
<dbReference type="InterPro" id="IPR013534">
    <property type="entry name" value="Starch_synth_cat_dom"/>
</dbReference>
<dbReference type="NCBIfam" id="TIGR02095">
    <property type="entry name" value="glgA"/>
    <property type="match status" value="1"/>
</dbReference>
<dbReference type="NCBIfam" id="NF010698">
    <property type="entry name" value="PRK14098.1"/>
    <property type="match status" value="1"/>
</dbReference>
<dbReference type="PANTHER" id="PTHR45825:SF11">
    <property type="entry name" value="ALPHA AMYLASE DOMAIN-CONTAINING PROTEIN"/>
    <property type="match status" value="1"/>
</dbReference>
<dbReference type="PANTHER" id="PTHR45825">
    <property type="entry name" value="GRANULE-BOUND STARCH SYNTHASE 1, CHLOROPLASTIC/AMYLOPLASTIC"/>
    <property type="match status" value="1"/>
</dbReference>
<dbReference type="Pfam" id="PF08323">
    <property type="entry name" value="Glyco_transf_5"/>
    <property type="match status" value="1"/>
</dbReference>
<dbReference type="Pfam" id="PF00534">
    <property type="entry name" value="Glycos_transf_1"/>
    <property type="match status" value="1"/>
</dbReference>
<dbReference type="SUPFAM" id="SSF53756">
    <property type="entry name" value="UDP-Glycosyltransferase/glycogen phosphorylase"/>
    <property type="match status" value="1"/>
</dbReference>
<organism>
    <name type="scientific">Chlorobaculum tepidum (strain ATCC 49652 / DSM 12025 / NBRC 103806 / TLS)</name>
    <name type="common">Chlorobium tepidum</name>
    <dbReference type="NCBI Taxonomy" id="194439"/>
    <lineage>
        <taxon>Bacteria</taxon>
        <taxon>Pseudomonadati</taxon>
        <taxon>Chlorobiota</taxon>
        <taxon>Chlorobiia</taxon>
        <taxon>Chlorobiales</taxon>
        <taxon>Chlorobiaceae</taxon>
        <taxon>Chlorobaculum</taxon>
    </lineage>
</organism>
<sequence>MARRNFKVLYVSGESSPFVRVSSLADYMASFPQALEEEGFEARIMMPKYGIINDRKFRLHDVLRLSDIEVPLKDKTDMLHIKVTALPSSKIQTYFLYNEKYFKRYGLFSDISLGGDHKGSAERIIFFSVGVMETLVRLGWQPDIIHCHDWHAGLVALLAKTRYAKHDFFKKVKVVQTIHNVYRQGVFPSKAFQKHLDPEVCDALDMEGGEVNLLATGIKHADLVTTTSDRYARQLLDDPELSFGMDKALKACGDRFHGILNGMDTRQWNPSSDKLIKKRYSAEQPEMKLEDKKVLLEEVGLPFSEETPVVGVIGSFDQYQGAEIVKASLAKLLELDIQLIVFGSGDKEFDQALKETAEENEEKMAFRPEFTDAFYHQMIAGLDILLMTSRIEACGMMQMFAMNYGTVPVAYAGGGIVDTIEEVSGDKGTGFIFTDYTPEALTAKLQEALALFANRERWSALMLECMGRDFSWSTSAGQYAELYRNLLG</sequence>
<reference key="1">
    <citation type="journal article" date="2002" name="Proc. Natl. Acad. Sci. U.S.A.">
        <title>The complete genome sequence of Chlorobium tepidum TLS, a photosynthetic, anaerobic, green-sulfur bacterium.</title>
        <authorList>
            <person name="Eisen J.A."/>
            <person name="Nelson K.E."/>
            <person name="Paulsen I.T."/>
            <person name="Heidelberg J.F."/>
            <person name="Wu M."/>
            <person name="Dodson R.J."/>
            <person name="DeBoy R.T."/>
            <person name="Gwinn M.L."/>
            <person name="Nelson W.C."/>
            <person name="Haft D.H."/>
            <person name="Hickey E.K."/>
            <person name="Peterson J.D."/>
            <person name="Durkin A.S."/>
            <person name="Kolonay J.F."/>
            <person name="Yang F."/>
            <person name="Holt I.E."/>
            <person name="Umayam L.A."/>
            <person name="Mason T.M."/>
            <person name="Brenner M."/>
            <person name="Shea T.P."/>
            <person name="Parksey D.S."/>
            <person name="Nierman W.C."/>
            <person name="Feldblyum T.V."/>
            <person name="Hansen C.L."/>
            <person name="Craven M.B."/>
            <person name="Radune D."/>
            <person name="Vamathevan J.J."/>
            <person name="Khouri H.M."/>
            <person name="White O."/>
            <person name="Gruber T.M."/>
            <person name="Ketchum K.A."/>
            <person name="Venter J.C."/>
            <person name="Tettelin H."/>
            <person name="Bryant D.A."/>
            <person name="Fraser C.M."/>
        </authorList>
    </citation>
    <scope>NUCLEOTIDE SEQUENCE [LARGE SCALE GENOMIC DNA]</scope>
    <source>
        <strain>ATCC 49652 / DSM 12025 / NBRC 103806 / TLS</strain>
    </source>
</reference>
<evidence type="ECO:0000255" key="1">
    <source>
        <dbReference type="HAMAP-Rule" id="MF_00484"/>
    </source>
</evidence>